<keyword id="KW-0963">Cytoplasm</keyword>
<keyword id="KW-0460">Magnesium</keyword>
<keyword id="KW-0479">Metal-binding</keyword>
<keyword id="KW-0566">Pantothenate biosynthesis</keyword>
<keyword id="KW-0808">Transferase</keyword>
<organism>
    <name type="scientific">Staphylococcus epidermidis (strain ATCC 12228 / FDA PCI 1200)</name>
    <dbReference type="NCBI Taxonomy" id="176280"/>
    <lineage>
        <taxon>Bacteria</taxon>
        <taxon>Bacillati</taxon>
        <taxon>Bacillota</taxon>
        <taxon>Bacilli</taxon>
        <taxon>Bacillales</taxon>
        <taxon>Staphylococcaceae</taxon>
        <taxon>Staphylococcus</taxon>
    </lineage>
</organism>
<feature type="chain" id="PRO_0000184894" description="3-methyl-2-oxobutanoate hydroxymethyltransferase">
    <location>
        <begin position="1"/>
        <end position="272"/>
    </location>
</feature>
<feature type="active site" description="Proton acceptor" evidence="1">
    <location>
        <position position="179"/>
    </location>
</feature>
<feature type="binding site" evidence="1">
    <location>
        <begin position="43"/>
        <end position="44"/>
    </location>
    <ligand>
        <name>3-methyl-2-oxobutanoate</name>
        <dbReference type="ChEBI" id="CHEBI:11851"/>
    </ligand>
</feature>
<feature type="binding site" evidence="1">
    <location>
        <position position="43"/>
    </location>
    <ligand>
        <name>Mg(2+)</name>
        <dbReference type="ChEBI" id="CHEBI:18420"/>
    </ligand>
</feature>
<feature type="binding site" evidence="1">
    <location>
        <position position="82"/>
    </location>
    <ligand>
        <name>3-methyl-2-oxobutanoate</name>
        <dbReference type="ChEBI" id="CHEBI:11851"/>
    </ligand>
</feature>
<feature type="binding site" evidence="1">
    <location>
        <position position="82"/>
    </location>
    <ligand>
        <name>Mg(2+)</name>
        <dbReference type="ChEBI" id="CHEBI:18420"/>
    </ligand>
</feature>
<feature type="binding site" evidence="1">
    <location>
        <position position="112"/>
    </location>
    <ligand>
        <name>3-methyl-2-oxobutanoate</name>
        <dbReference type="ChEBI" id="CHEBI:11851"/>
    </ligand>
</feature>
<feature type="binding site" evidence="1">
    <location>
        <position position="114"/>
    </location>
    <ligand>
        <name>Mg(2+)</name>
        <dbReference type="ChEBI" id="CHEBI:18420"/>
    </ligand>
</feature>
<name>PANB_STAES</name>
<gene>
    <name evidence="1" type="primary">panB</name>
    <name type="ordered locus">SE_2141</name>
</gene>
<evidence type="ECO:0000255" key="1">
    <source>
        <dbReference type="HAMAP-Rule" id="MF_00156"/>
    </source>
</evidence>
<proteinExistence type="inferred from homology"/>
<dbReference type="EC" id="2.1.2.11" evidence="1"/>
<dbReference type="EMBL" id="AE015929">
    <property type="protein sequence ID" value="AAO05783.1"/>
    <property type="molecule type" value="Genomic_DNA"/>
</dbReference>
<dbReference type="RefSeq" id="NP_765696.1">
    <property type="nucleotide sequence ID" value="NC_004461.1"/>
</dbReference>
<dbReference type="RefSeq" id="WP_001830671.1">
    <property type="nucleotide sequence ID" value="NZ_WBME01000005.1"/>
</dbReference>
<dbReference type="SMR" id="Q8CR20"/>
<dbReference type="GeneID" id="50017781"/>
<dbReference type="KEGG" id="sep:SE_2141"/>
<dbReference type="PATRIC" id="fig|176280.10.peg.2093"/>
<dbReference type="eggNOG" id="COG0413">
    <property type="taxonomic scope" value="Bacteria"/>
</dbReference>
<dbReference type="HOGENOM" id="CLU_036645_1_0_9"/>
<dbReference type="OrthoDB" id="9781789at2"/>
<dbReference type="UniPathway" id="UPA00028">
    <property type="reaction ID" value="UER00003"/>
</dbReference>
<dbReference type="Proteomes" id="UP000001411">
    <property type="component" value="Chromosome"/>
</dbReference>
<dbReference type="GO" id="GO:0005737">
    <property type="term" value="C:cytoplasm"/>
    <property type="evidence" value="ECO:0007669"/>
    <property type="project" value="UniProtKB-SubCell"/>
</dbReference>
<dbReference type="GO" id="GO:0003864">
    <property type="term" value="F:3-methyl-2-oxobutanoate hydroxymethyltransferase activity"/>
    <property type="evidence" value="ECO:0007669"/>
    <property type="project" value="UniProtKB-UniRule"/>
</dbReference>
<dbReference type="GO" id="GO:0000287">
    <property type="term" value="F:magnesium ion binding"/>
    <property type="evidence" value="ECO:0007669"/>
    <property type="project" value="TreeGrafter"/>
</dbReference>
<dbReference type="GO" id="GO:0015940">
    <property type="term" value="P:pantothenate biosynthetic process"/>
    <property type="evidence" value="ECO:0007669"/>
    <property type="project" value="UniProtKB-UniRule"/>
</dbReference>
<dbReference type="CDD" id="cd06557">
    <property type="entry name" value="KPHMT-like"/>
    <property type="match status" value="1"/>
</dbReference>
<dbReference type="FunFam" id="3.20.20.60:FF:000003">
    <property type="entry name" value="3-methyl-2-oxobutanoate hydroxymethyltransferase"/>
    <property type="match status" value="1"/>
</dbReference>
<dbReference type="Gene3D" id="3.20.20.60">
    <property type="entry name" value="Phosphoenolpyruvate-binding domains"/>
    <property type="match status" value="1"/>
</dbReference>
<dbReference type="HAMAP" id="MF_00156">
    <property type="entry name" value="PanB"/>
    <property type="match status" value="1"/>
</dbReference>
<dbReference type="InterPro" id="IPR003700">
    <property type="entry name" value="Pantoate_hydroxy_MeTrfase"/>
</dbReference>
<dbReference type="InterPro" id="IPR015813">
    <property type="entry name" value="Pyrv/PenolPyrv_kinase-like_dom"/>
</dbReference>
<dbReference type="InterPro" id="IPR040442">
    <property type="entry name" value="Pyrv_kinase-like_dom_sf"/>
</dbReference>
<dbReference type="NCBIfam" id="TIGR00222">
    <property type="entry name" value="panB"/>
    <property type="match status" value="1"/>
</dbReference>
<dbReference type="NCBIfam" id="NF001452">
    <property type="entry name" value="PRK00311.1"/>
    <property type="match status" value="1"/>
</dbReference>
<dbReference type="PANTHER" id="PTHR20881">
    <property type="entry name" value="3-METHYL-2-OXOBUTANOATE HYDROXYMETHYLTRANSFERASE"/>
    <property type="match status" value="1"/>
</dbReference>
<dbReference type="PANTHER" id="PTHR20881:SF0">
    <property type="entry name" value="3-METHYL-2-OXOBUTANOATE HYDROXYMETHYLTRANSFERASE"/>
    <property type="match status" value="1"/>
</dbReference>
<dbReference type="Pfam" id="PF02548">
    <property type="entry name" value="Pantoate_transf"/>
    <property type="match status" value="1"/>
</dbReference>
<dbReference type="PIRSF" id="PIRSF000388">
    <property type="entry name" value="Pantoate_hydroxy_MeTrfase"/>
    <property type="match status" value="1"/>
</dbReference>
<dbReference type="SUPFAM" id="SSF51621">
    <property type="entry name" value="Phosphoenolpyruvate/pyruvate domain"/>
    <property type="match status" value="1"/>
</dbReference>
<sequence>MKTLNHLNKMKASQQKISMVTAYDYPSAKQAQQAEIDMILVGDSLGMTVLGYDSTVQVTLNDMIHHGKAVKRGASDTFIVVDMPIGTVGLSDEEDLKNALKLYQNTNANAVKVEGAHLTSFIQKATKMGIPVVSHLGLTPQSVGVMGYKLQGDTKTAAMQLIKDAKAMETAGAVVLVLEAIPSDLAREISQQLTIPVIGIGAGKDTDGQVLVYHDMLNYGVDRHAKFVKQFADFSSGIDGLRQYNEEVKAGTFPSENHTYKKRIMDEVEQHD</sequence>
<comment type="function">
    <text evidence="1">Catalyzes the reversible reaction in which hydroxymethyl group from 5,10-methylenetetrahydrofolate is transferred onto alpha-ketoisovalerate to form ketopantoate.</text>
</comment>
<comment type="catalytic activity">
    <reaction evidence="1">
        <text>3-methyl-2-oxobutanoate + (6R)-5,10-methylene-5,6,7,8-tetrahydrofolate + H2O = 2-dehydropantoate + (6S)-5,6,7,8-tetrahydrofolate</text>
        <dbReference type="Rhea" id="RHEA:11824"/>
        <dbReference type="ChEBI" id="CHEBI:11561"/>
        <dbReference type="ChEBI" id="CHEBI:11851"/>
        <dbReference type="ChEBI" id="CHEBI:15377"/>
        <dbReference type="ChEBI" id="CHEBI:15636"/>
        <dbReference type="ChEBI" id="CHEBI:57453"/>
        <dbReference type="EC" id="2.1.2.11"/>
    </reaction>
</comment>
<comment type="cofactor">
    <cofactor evidence="1">
        <name>Mg(2+)</name>
        <dbReference type="ChEBI" id="CHEBI:18420"/>
    </cofactor>
    <text evidence="1">Binds 1 Mg(2+) ion per subunit.</text>
</comment>
<comment type="pathway">
    <text evidence="1">Cofactor biosynthesis; (R)-pantothenate biosynthesis; (R)-pantoate from 3-methyl-2-oxobutanoate: step 1/2.</text>
</comment>
<comment type="subunit">
    <text evidence="1">Homodecamer; pentamer of dimers.</text>
</comment>
<comment type="subcellular location">
    <subcellularLocation>
        <location evidence="1">Cytoplasm</location>
    </subcellularLocation>
</comment>
<comment type="similarity">
    <text evidence="1">Belongs to the PanB family.</text>
</comment>
<reference key="1">
    <citation type="journal article" date="2003" name="Mol. Microbiol.">
        <title>Genome-based analysis of virulence genes in a non-biofilm-forming Staphylococcus epidermidis strain (ATCC 12228).</title>
        <authorList>
            <person name="Zhang Y.-Q."/>
            <person name="Ren S.-X."/>
            <person name="Li H.-L."/>
            <person name="Wang Y.-X."/>
            <person name="Fu G."/>
            <person name="Yang J."/>
            <person name="Qin Z.-Q."/>
            <person name="Miao Y.-G."/>
            <person name="Wang W.-Y."/>
            <person name="Chen R.-S."/>
            <person name="Shen Y."/>
            <person name="Chen Z."/>
            <person name="Yuan Z.-H."/>
            <person name="Zhao G.-P."/>
            <person name="Qu D."/>
            <person name="Danchin A."/>
            <person name="Wen Y.-M."/>
        </authorList>
    </citation>
    <scope>NUCLEOTIDE SEQUENCE [LARGE SCALE GENOMIC DNA]</scope>
    <source>
        <strain>ATCC 12228 / FDA PCI 1200</strain>
    </source>
</reference>
<accession>Q8CR20</accession>
<protein>
    <recommendedName>
        <fullName evidence="1">3-methyl-2-oxobutanoate hydroxymethyltransferase</fullName>
        <ecNumber evidence="1">2.1.2.11</ecNumber>
    </recommendedName>
    <alternativeName>
        <fullName evidence="1">Ketopantoate hydroxymethyltransferase</fullName>
        <shortName evidence="1">KPHMT</shortName>
    </alternativeName>
</protein>